<name>CLPS_ECO8A</name>
<dbReference type="EMBL" id="CU928160">
    <property type="protein sequence ID" value="CAQ97785.1"/>
    <property type="molecule type" value="Genomic_DNA"/>
</dbReference>
<dbReference type="RefSeq" id="WP_000520781.1">
    <property type="nucleotide sequence ID" value="NC_011741.1"/>
</dbReference>
<dbReference type="SMR" id="B7M809"/>
<dbReference type="GeneID" id="86863397"/>
<dbReference type="KEGG" id="ecr:ECIAI1_0921"/>
<dbReference type="HOGENOM" id="CLU_134358_2_1_6"/>
<dbReference type="GO" id="GO:0030163">
    <property type="term" value="P:protein catabolic process"/>
    <property type="evidence" value="ECO:0007669"/>
    <property type="project" value="InterPro"/>
</dbReference>
<dbReference type="GO" id="GO:0006508">
    <property type="term" value="P:proteolysis"/>
    <property type="evidence" value="ECO:0007669"/>
    <property type="project" value="UniProtKB-UniRule"/>
</dbReference>
<dbReference type="FunFam" id="3.30.1390.10:FF:000002">
    <property type="entry name" value="ATP-dependent Clp protease adapter protein ClpS"/>
    <property type="match status" value="1"/>
</dbReference>
<dbReference type="Gene3D" id="3.30.1390.10">
    <property type="match status" value="1"/>
</dbReference>
<dbReference type="HAMAP" id="MF_00302">
    <property type="entry name" value="ClpS"/>
    <property type="match status" value="1"/>
</dbReference>
<dbReference type="InterPro" id="IPR022935">
    <property type="entry name" value="ClpS"/>
</dbReference>
<dbReference type="InterPro" id="IPR003769">
    <property type="entry name" value="ClpS_core"/>
</dbReference>
<dbReference type="InterPro" id="IPR014719">
    <property type="entry name" value="Ribosomal_bL12_C/ClpS-like"/>
</dbReference>
<dbReference type="NCBIfam" id="NF000670">
    <property type="entry name" value="PRK00033.1-3"/>
    <property type="match status" value="1"/>
</dbReference>
<dbReference type="NCBIfam" id="NF000672">
    <property type="entry name" value="PRK00033.1-5"/>
    <property type="match status" value="1"/>
</dbReference>
<dbReference type="PANTHER" id="PTHR33473:SF19">
    <property type="entry name" value="ATP-DEPENDENT CLP PROTEASE ADAPTER PROTEIN CLPS"/>
    <property type="match status" value="1"/>
</dbReference>
<dbReference type="PANTHER" id="PTHR33473">
    <property type="entry name" value="ATP-DEPENDENT CLP PROTEASE ADAPTER PROTEIN CLPS1, CHLOROPLASTIC"/>
    <property type="match status" value="1"/>
</dbReference>
<dbReference type="Pfam" id="PF02617">
    <property type="entry name" value="ClpS"/>
    <property type="match status" value="1"/>
</dbReference>
<dbReference type="SUPFAM" id="SSF54736">
    <property type="entry name" value="ClpS-like"/>
    <property type="match status" value="1"/>
</dbReference>
<proteinExistence type="inferred from homology"/>
<protein>
    <recommendedName>
        <fullName evidence="1">ATP-dependent Clp protease adapter protein ClpS</fullName>
    </recommendedName>
</protein>
<evidence type="ECO:0000255" key="1">
    <source>
        <dbReference type="HAMAP-Rule" id="MF_00302"/>
    </source>
</evidence>
<reference key="1">
    <citation type="journal article" date="2009" name="PLoS Genet.">
        <title>Organised genome dynamics in the Escherichia coli species results in highly diverse adaptive paths.</title>
        <authorList>
            <person name="Touchon M."/>
            <person name="Hoede C."/>
            <person name="Tenaillon O."/>
            <person name="Barbe V."/>
            <person name="Baeriswyl S."/>
            <person name="Bidet P."/>
            <person name="Bingen E."/>
            <person name="Bonacorsi S."/>
            <person name="Bouchier C."/>
            <person name="Bouvet O."/>
            <person name="Calteau A."/>
            <person name="Chiapello H."/>
            <person name="Clermont O."/>
            <person name="Cruveiller S."/>
            <person name="Danchin A."/>
            <person name="Diard M."/>
            <person name="Dossat C."/>
            <person name="Karoui M.E."/>
            <person name="Frapy E."/>
            <person name="Garry L."/>
            <person name="Ghigo J.M."/>
            <person name="Gilles A.M."/>
            <person name="Johnson J."/>
            <person name="Le Bouguenec C."/>
            <person name="Lescat M."/>
            <person name="Mangenot S."/>
            <person name="Martinez-Jehanne V."/>
            <person name="Matic I."/>
            <person name="Nassif X."/>
            <person name="Oztas S."/>
            <person name="Petit M.A."/>
            <person name="Pichon C."/>
            <person name="Rouy Z."/>
            <person name="Ruf C.S."/>
            <person name="Schneider D."/>
            <person name="Tourret J."/>
            <person name="Vacherie B."/>
            <person name="Vallenet D."/>
            <person name="Medigue C."/>
            <person name="Rocha E.P.C."/>
            <person name="Denamur E."/>
        </authorList>
    </citation>
    <scope>NUCLEOTIDE SEQUENCE [LARGE SCALE GENOMIC DNA]</scope>
    <source>
        <strain>IAI1</strain>
    </source>
</reference>
<accession>B7M809</accession>
<feature type="chain" id="PRO_1000119500" description="ATP-dependent Clp protease adapter protein ClpS">
    <location>
        <begin position="1"/>
        <end position="106"/>
    </location>
</feature>
<sequence>MGKTNDWLDFDQLAEEKVRDALKPPSMYKVILVNDDYTPMEFVIDVLQKFFSYDVERATQLMLAVHYQGKAICGVFTAEVAETKVAMVNKYARENEHPLLCTLEKA</sequence>
<comment type="function">
    <text evidence="1">Involved in the modulation of the specificity of the ClpAP-mediated ATP-dependent protein degradation.</text>
</comment>
<comment type="subunit">
    <text evidence="1">Binds to the N-terminal domain of the chaperone ClpA.</text>
</comment>
<comment type="similarity">
    <text evidence="1">Belongs to the ClpS family.</text>
</comment>
<organism>
    <name type="scientific">Escherichia coli O8 (strain IAI1)</name>
    <dbReference type="NCBI Taxonomy" id="585034"/>
    <lineage>
        <taxon>Bacteria</taxon>
        <taxon>Pseudomonadati</taxon>
        <taxon>Pseudomonadota</taxon>
        <taxon>Gammaproteobacteria</taxon>
        <taxon>Enterobacterales</taxon>
        <taxon>Enterobacteriaceae</taxon>
        <taxon>Escherichia</taxon>
    </lineage>
</organism>
<gene>
    <name evidence="1" type="primary">clpS</name>
    <name type="ordered locus">ECIAI1_0921</name>
</gene>